<reference key="1">
    <citation type="journal article" date="1999" name="Nat. Genet.">
        <title>Comparative genomes of Chlamydia pneumoniae and C. trachomatis.</title>
        <authorList>
            <person name="Kalman S."/>
            <person name="Mitchell W.P."/>
            <person name="Marathe R."/>
            <person name="Lammel C.J."/>
            <person name="Fan J."/>
            <person name="Hyman R.W."/>
            <person name="Olinger L."/>
            <person name="Grimwood J."/>
            <person name="Davis R.W."/>
            <person name="Stephens R.S."/>
        </authorList>
    </citation>
    <scope>NUCLEOTIDE SEQUENCE [LARGE SCALE GENOMIC DNA]</scope>
    <source>
        <strain>CWL029</strain>
    </source>
</reference>
<reference key="2">
    <citation type="journal article" date="2000" name="Nucleic Acids Res.">
        <title>Genome sequences of Chlamydia trachomatis MoPn and Chlamydia pneumoniae AR39.</title>
        <authorList>
            <person name="Read T.D."/>
            <person name="Brunham R.C."/>
            <person name="Shen C."/>
            <person name="Gill S.R."/>
            <person name="Heidelberg J.F."/>
            <person name="White O."/>
            <person name="Hickey E.K."/>
            <person name="Peterson J.D."/>
            <person name="Utterback T.R."/>
            <person name="Berry K.J."/>
            <person name="Bass S."/>
            <person name="Linher K.D."/>
            <person name="Weidman J.F."/>
            <person name="Khouri H.M."/>
            <person name="Craven B."/>
            <person name="Bowman C."/>
            <person name="Dodson R.J."/>
            <person name="Gwinn M.L."/>
            <person name="Nelson W.C."/>
            <person name="DeBoy R.T."/>
            <person name="Kolonay J.F."/>
            <person name="McClarty G."/>
            <person name="Salzberg S.L."/>
            <person name="Eisen J.A."/>
            <person name="Fraser C.M."/>
        </authorList>
    </citation>
    <scope>NUCLEOTIDE SEQUENCE [LARGE SCALE GENOMIC DNA]</scope>
    <source>
        <strain>AR39</strain>
    </source>
</reference>
<reference key="3">
    <citation type="journal article" date="2000" name="Nucleic Acids Res.">
        <title>Comparison of whole genome sequences of Chlamydia pneumoniae J138 from Japan and CWL029 from USA.</title>
        <authorList>
            <person name="Shirai M."/>
            <person name="Hirakawa H."/>
            <person name="Kimoto M."/>
            <person name="Tabuchi M."/>
            <person name="Kishi F."/>
            <person name="Ouchi K."/>
            <person name="Shiba T."/>
            <person name="Ishii K."/>
            <person name="Hattori M."/>
            <person name="Kuhara S."/>
            <person name="Nakazawa T."/>
        </authorList>
    </citation>
    <scope>NUCLEOTIDE SEQUENCE [LARGE SCALE GENOMIC DNA]</scope>
    <source>
        <strain>J138</strain>
    </source>
</reference>
<reference key="4">
    <citation type="submission" date="2002-05" db="EMBL/GenBank/DDBJ databases">
        <title>The genome sequence of Chlamydia pneumoniae TW183 and comparison with other Chlamydia strains based on whole genome sequence analysis.</title>
        <authorList>
            <person name="Geng M.M."/>
            <person name="Schuhmacher A."/>
            <person name="Muehldorfer I."/>
            <person name="Bensch K.W."/>
            <person name="Schaefer K.P."/>
            <person name="Schneider S."/>
            <person name="Pohl T."/>
            <person name="Essig A."/>
            <person name="Marre R."/>
            <person name="Melchers K."/>
        </authorList>
    </citation>
    <scope>NUCLEOTIDE SEQUENCE [LARGE SCALE GENOMIC DNA]</scope>
    <source>
        <strain>TW-183</strain>
    </source>
</reference>
<sequence length="103" mass="11751">MSFKRFLQQIPVRICLLIIYLYQWLISPLLGSCCRFFPSCSHYAEQALKSHGFLMGCWLSIKRIGKCGPWHPGGIDMVPKTALQEVLEPYQEIDGGDSSHFSE</sequence>
<protein>
    <recommendedName>
        <fullName evidence="1">Putative membrane protein insertion efficiency factor</fullName>
    </recommendedName>
</protein>
<keyword id="KW-0997">Cell inner membrane</keyword>
<keyword id="KW-1003">Cell membrane</keyword>
<keyword id="KW-0472">Membrane</keyword>
<feature type="chain" id="PRO_0000171810" description="Putative membrane protein insertion efficiency factor">
    <location>
        <begin position="1"/>
        <end position="103"/>
    </location>
</feature>
<evidence type="ECO:0000255" key="1">
    <source>
        <dbReference type="HAMAP-Rule" id="MF_00386"/>
    </source>
</evidence>
<evidence type="ECO:0000305" key="2"/>
<organism>
    <name type="scientific">Chlamydia pneumoniae</name>
    <name type="common">Chlamydophila pneumoniae</name>
    <dbReference type="NCBI Taxonomy" id="83558"/>
    <lineage>
        <taxon>Bacteria</taxon>
        <taxon>Pseudomonadati</taxon>
        <taxon>Chlamydiota</taxon>
        <taxon>Chlamydiia</taxon>
        <taxon>Chlamydiales</taxon>
        <taxon>Chlamydiaceae</taxon>
        <taxon>Chlamydia/Chlamydophila group</taxon>
        <taxon>Chlamydia</taxon>
    </lineage>
</organism>
<name>YIDD_CHLPN</name>
<dbReference type="EMBL" id="AE001363">
    <property type="protein sequence ID" value="AAD18731.1"/>
    <property type="molecule type" value="Genomic_DNA"/>
</dbReference>
<dbReference type="EMBL" id="AE002161">
    <property type="protein sequence ID" value="AAF38037.1"/>
    <property type="status" value="ALT_INIT"/>
    <property type="molecule type" value="Genomic_DNA"/>
</dbReference>
<dbReference type="EMBL" id="BA000008">
    <property type="protein sequence ID" value="BAA98799.1"/>
    <property type="molecule type" value="Genomic_DNA"/>
</dbReference>
<dbReference type="EMBL" id="AE009440">
    <property type="protein sequence ID" value="AAP98545.1"/>
    <property type="molecule type" value="Genomic_DNA"/>
</dbReference>
<dbReference type="PIR" id="E81606">
    <property type="entry name" value="E81606"/>
</dbReference>
<dbReference type="PIR" id="E86564">
    <property type="entry name" value="E86564"/>
</dbReference>
<dbReference type="PIR" id="H72060">
    <property type="entry name" value="H72060"/>
</dbReference>
<dbReference type="RefSeq" id="NP_224788.1">
    <property type="nucleotide sequence ID" value="NC_000922.1"/>
</dbReference>
<dbReference type="GeneID" id="45050639"/>
<dbReference type="KEGG" id="cpa:CP_0156"/>
<dbReference type="KEGG" id="cpj:yidD"/>
<dbReference type="KEGG" id="cpn:CPn_0592"/>
<dbReference type="KEGG" id="cpt:CpB0617"/>
<dbReference type="PATRIC" id="fig|115713.3.peg.660"/>
<dbReference type="eggNOG" id="COG0759">
    <property type="taxonomic scope" value="Bacteria"/>
</dbReference>
<dbReference type="HOGENOM" id="CLU_144811_2_1_0"/>
<dbReference type="OrthoDB" id="9801753at2"/>
<dbReference type="Proteomes" id="UP000000583">
    <property type="component" value="Chromosome"/>
</dbReference>
<dbReference type="Proteomes" id="UP000000801">
    <property type="component" value="Chromosome"/>
</dbReference>
<dbReference type="GO" id="GO:0005886">
    <property type="term" value="C:plasma membrane"/>
    <property type="evidence" value="ECO:0007669"/>
    <property type="project" value="UniProtKB-SubCell"/>
</dbReference>
<dbReference type="HAMAP" id="MF_00386">
    <property type="entry name" value="UPF0161_YidD"/>
    <property type="match status" value="1"/>
</dbReference>
<dbReference type="InterPro" id="IPR002696">
    <property type="entry name" value="Membr_insert_effic_factor_YidD"/>
</dbReference>
<dbReference type="NCBIfam" id="TIGR00278">
    <property type="entry name" value="membrane protein insertion efficiency factor YidD"/>
    <property type="match status" value="1"/>
</dbReference>
<dbReference type="PANTHER" id="PTHR33383">
    <property type="entry name" value="MEMBRANE PROTEIN INSERTION EFFICIENCY FACTOR-RELATED"/>
    <property type="match status" value="1"/>
</dbReference>
<dbReference type="PANTHER" id="PTHR33383:SF1">
    <property type="entry name" value="MEMBRANE PROTEIN INSERTION EFFICIENCY FACTOR-RELATED"/>
    <property type="match status" value="1"/>
</dbReference>
<dbReference type="Pfam" id="PF01809">
    <property type="entry name" value="YidD"/>
    <property type="match status" value="1"/>
</dbReference>
<dbReference type="SMART" id="SM01234">
    <property type="entry name" value="Haemolytic"/>
    <property type="match status" value="1"/>
</dbReference>
<comment type="function">
    <text evidence="1">Could be involved in insertion of integral membrane proteins into the membrane.</text>
</comment>
<comment type="subcellular location">
    <subcellularLocation>
        <location evidence="1">Cell inner membrane</location>
        <topology evidence="1">Peripheral membrane protein</topology>
        <orientation evidence="1">Cytoplasmic side</orientation>
    </subcellularLocation>
</comment>
<comment type="similarity">
    <text evidence="1">Belongs to the UPF0161 family.</text>
</comment>
<comment type="sequence caution" evidence="2">
    <conflict type="erroneous initiation">
        <sequence resource="EMBL-CDS" id="AAF38037"/>
    </conflict>
</comment>
<proteinExistence type="inferred from homology"/>
<gene>
    <name type="ordered locus">CPn_0592</name>
    <name type="ordered locus">CP_0156</name>
    <name type="ordered locus">CPj0592</name>
    <name type="ordered locus">CpB0617</name>
</gene>
<accession>Q9Z7W2</accession>
<accession>Q9K2D2</accession>